<feature type="chain" id="PRO_1000096543" description="Triosephosphate isomerase">
    <location>
        <begin position="1"/>
        <end position="248"/>
    </location>
</feature>
<feature type="active site" description="Electrophile" evidence="1">
    <location>
        <position position="94"/>
    </location>
</feature>
<feature type="active site" description="Proton acceptor" evidence="1">
    <location>
        <position position="166"/>
    </location>
</feature>
<feature type="binding site" evidence="1">
    <location>
        <begin position="9"/>
        <end position="11"/>
    </location>
    <ligand>
        <name>substrate</name>
    </ligand>
</feature>
<feature type="binding site" evidence="1">
    <location>
        <position position="172"/>
    </location>
    <ligand>
        <name>substrate</name>
    </ligand>
</feature>
<feature type="binding site" evidence="1">
    <location>
        <position position="212"/>
    </location>
    <ligand>
        <name>substrate</name>
    </ligand>
</feature>
<feature type="binding site" evidence="1">
    <location>
        <begin position="233"/>
        <end position="234"/>
    </location>
    <ligand>
        <name>substrate</name>
    </ligand>
</feature>
<gene>
    <name evidence="1" type="primary">tpiA</name>
    <name type="ordered locus">Teth514_1308</name>
</gene>
<keyword id="KW-0963">Cytoplasm</keyword>
<keyword id="KW-0312">Gluconeogenesis</keyword>
<keyword id="KW-0324">Glycolysis</keyword>
<keyword id="KW-0413">Isomerase</keyword>
<comment type="function">
    <text evidence="1">Involved in the gluconeogenesis. Catalyzes stereospecifically the conversion of dihydroxyacetone phosphate (DHAP) to D-glyceraldehyde-3-phosphate (G3P).</text>
</comment>
<comment type="catalytic activity">
    <reaction evidence="1">
        <text>D-glyceraldehyde 3-phosphate = dihydroxyacetone phosphate</text>
        <dbReference type="Rhea" id="RHEA:18585"/>
        <dbReference type="ChEBI" id="CHEBI:57642"/>
        <dbReference type="ChEBI" id="CHEBI:59776"/>
        <dbReference type="EC" id="5.3.1.1"/>
    </reaction>
</comment>
<comment type="pathway">
    <text evidence="1">Carbohydrate biosynthesis; gluconeogenesis.</text>
</comment>
<comment type="pathway">
    <text evidence="1">Carbohydrate degradation; glycolysis; D-glyceraldehyde 3-phosphate from glycerone phosphate: step 1/1.</text>
</comment>
<comment type="subunit">
    <text evidence="1">Homodimer.</text>
</comment>
<comment type="subcellular location">
    <subcellularLocation>
        <location evidence="1">Cytoplasm</location>
    </subcellularLocation>
</comment>
<comment type="similarity">
    <text evidence="1">Belongs to the triosephosphate isomerase family.</text>
</comment>
<evidence type="ECO:0000255" key="1">
    <source>
        <dbReference type="HAMAP-Rule" id="MF_00147"/>
    </source>
</evidence>
<reference key="1">
    <citation type="submission" date="2008-01" db="EMBL/GenBank/DDBJ databases">
        <title>Complete sequence of Thermoanaerobacter sp. X514.</title>
        <authorList>
            <consortium name="US DOE Joint Genome Institute"/>
            <person name="Copeland A."/>
            <person name="Lucas S."/>
            <person name="Lapidus A."/>
            <person name="Barry K."/>
            <person name="Glavina del Rio T."/>
            <person name="Dalin E."/>
            <person name="Tice H."/>
            <person name="Pitluck S."/>
            <person name="Bruce D."/>
            <person name="Goodwin L."/>
            <person name="Saunders E."/>
            <person name="Brettin T."/>
            <person name="Detter J.C."/>
            <person name="Han C."/>
            <person name="Schmutz J."/>
            <person name="Larimer F."/>
            <person name="Land M."/>
            <person name="Hauser L."/>
            <person name="Kyrpides N."/>
            <person name="Kim E."/>
            <person name="Hemme C."/>
            <person name="Fields M.W."/>
            <person name="He Z."/>
            <person name="Zhou J."/>
            <person name="Richardson P."/>
        </authorList>
    </citation>
    <scope>NUCLEOTIDE SEQUENCE [LARGE SCALE GENOMIC DNA]</scope>
    <source>
        <strain>X514</strain>
    </source>
</reference>
<accession>B0K6X4</accession>
<name>TPIS_THEPX</name>
<proteinExistence type="inferred from homology"/>
<protein>
    <recommendedName>
        <fullName evidence="1">Triosephosphate isomerase</fullName>
        <shortName evidence="1">TIM</shortName>
        <shortName evidence="1">TPI</shortName>
        <ecNumber evidence="1">5.3.1.1</ecNumber>
    </recommendedName>
    <alternativeName>
        <fullName evidence="1">Triose-phosphate isomerase</fullName>
    </alternativeName>
</protein>
<sequence>MRRPIIAGNWKMHMTPSEAVKLVDELIPQVKDAKAEVVVIPPFVDLTEVNKVIQGTNILLGAQDMFWEEKGAYTGEISPLMLKEIGVKYVVIGHSERRQYFGETDEMVNKKVLSALSHGLSPIVCVGESFSQREEGKTFEVVLSQTKEALKGVTHDDIVNVVIAYEPIWAIGTGKTATAKDANEVIKAIRNTIASLYGKEKADLVRIQYGGSVKPENISELMAESDIDGALVGGASLVASDFAKIVNY</sequence>
<organism>
    <name type="scientific">Thermoanaerobacter sp. (strain X514)</name>
    <dbReference type="NCBI Taxonomy" id="399726"/>
    <lineage>
        <taxon>Bacteria</taxon>
        <taxon>Bacillati</taxon>
        <taxon>Bacillota</taxon>
        <taxon>Clostridia</taxon>
        <taxon>Thermoanaerobacterales</taxon>
        <taxon>Thermoanaerobacteraceae</taxon>
        <taxon>Thermoanaerobacter</taxon>
    </lineage>
</organism>
<dbReference type="EC" id="5.3.1.1" evidence="1"/>
<dbReference type="EMBL" id="CP000923">
    <property type="protein sequence ID" value="ABY92600.1"/>
    <property type="molecule type" value="Genomic_DNA"/>
</dbReference>
<dbReference type="RefSeq" id="WP_012268685.1">
    <property type="nucleotide sequence ID" value="NC_010320.1"/>
</dbReference>
<dbReference type="SMR" id="B0K6X4"/>
<dbReference type="KEGG" id="tex:Teth514_1308"/>
<dbReference type="HOGENOM" id="CLU_024251_2_3_9"/>
<dbReference type="UniPathway" id="UPA00109">
    <property type="reaction ID" value="UER00189"/>
</dbReference>
<dbReference type="UniPathway" id="UPA00138"/>
<dbReference type="Proteomes" id="UP000002155">
    <property type="component" value="Chromosome"/>
</dbReference>
<dbReference type="GO" id="GO:0005829">
    <property type="term" value="C:cytosol"/>
    <property type="evidence" value="ECO:0007669"/>
    <property type="project" value="TreeGrafter"/>
</dbReference>
<dbReference type="GO" id="GO:0004807">
    <property type="term" value="F:triose-phosphate isomerase activity"/>
    <property type="evidence" value="ECO:0007669"/>
    <property type="project" value="UniProtKB-UniRule"/>
</dbReference>
<dbReference type="GO" id="GO:0006094">
    <property type="term" value="P:gluconeogenesis"/>
    <property type="evidence" value="ECO:0007669"/>
    <property type="project" value="UniProtKB-UniRule"/>
</dbReference>
<dbReference type="GO" id="GO:0046166">
    <property type="term" value="P:glyceraldehyde-3-phosphate biosynthetic process"/>
    <property type="evidence" value="ECO:0007669"/>
    <property type="project" value="TreeGrafter"/>
</dbReference>
<dbReference type="GO" id="GO:0019563">
    <property type="term" value="P:glycerol catabolic process"/>
    <property type="evidence" value="ECO:0007669"/>
    <property type="project" value="TreeGrafter"/>
</dbReference>
<dbReference type="GO" id="GO:0006096">
    <property type="term" value="P:glycolytic process"/>
    <property type="evidence" value="ECO:0007669"/>
    <property type="project" value="UniProtKB-UniRule"/>
</dbReference>
<dbReference type="CDD" id="cd00311">
    <property type="entry name" value="TIM"/>
    <property type="match status" value="1"/>
</dbReference>
<dbReference type="FunFam" id="3.20.20.70:FF:000016">
    <property type="entry name" value="Triosephosphate isomerase"/>
    <property type="match status" value="1"/>
</dbReference>
<dbReference type="Gene3D" id="3.20.20.70">
    <property type="entry name" value="Aldolase class I"/>
    <property type="match status" value="1"/>
</dbReference>
<dbReference type="HAMAP" id="MF_00147_B">
    <property type="entry name" value="TIM_B"/>
    <property type="match status" value="1"/>
</dbReference>
<dbReference type="InterPro" id="IPR013785">
    <property type="entry name" value="Aldolase_TIM"/>
</dbReference>
<dbReference type="InterPro" id="IPR035990">
    <property type="entry name" value="TIM_sf"/>
</dbReference>
<dbReference type="InterPro" id="IPR022896">
    <property type="entry name" value="TrioseP_Isoase_bac/euk"/>
</dbReference>
<dbReference type="InterPro" id="IPR000652">
    <property type="entry name" value="Triosephosphate_isomerase"/>
</dbReference>
<dbReference type="InterPro" id="IPR020861">
    <property type="entry name" value="Triosephosphate_isomerase_AS"/>
</dbReference>
<dbReference type="NCBIfam" id="TIGR00419">
    <property type="entry name" value="tim"/>
    <property type="match status" value="1"/>
</dbReference>
<dbReference type="PANTHER" id="PTHR21139">
    <property type="entry name" value="TRIOSEPHOSPHATE ISOMERASE"/>
    <property type="match status" value="1"/>
</dbReference>
<dbReference type="PANTHER" id="PTHR21139:SF42">
    <property type="entry name" value="TRIOSEPHOSPHATE ISOMERASE"/>
    <property type="match status" value="1"/>
</dbReference>
<dbReference type="Pfam" id="PF00121">
    <property type="entry name" value="TIM"/>
    <property type="match status" value="1"/>
</dbReference>
<dbReference type="SUPFAM" id="SSF51351">
    <property type="entry name" value="Triosephosphate isomerase (TIM)"/>
    <property type="match status" value="1"/>
</dbReference>
<dbReference type="PROSITE" id="PS00171">
    <property type="entry name" value="TIM_1"/>
    <property type="match status" value="1"/>
</dbReference>
<dbReference type="PROSITE" id="PS51440">
    <property type="entry name" value="TIM_2"/>
    <property type="match status" value="1"/>
</dbReference>